<reference key="1">
    <citation type="journal article" date="2008" name="Appl. Environ. Microbiol.">
        <title>The genome sequence of the metal-mobilizing, extremely thermoacidophilic archaeon Metallosphaera sedula provides insights into bioleaching-associated metabolism.</title>
        <authorList>
            <person name="Auernik K.S."/>
            <person name="Maezato Y."/>
            <person name="Blum P.H."/>
            <person name="Kelly R.M."/>
        </authorList>
    </citation>
    <scope>NUCLEOTIDE SEQUENCE [LARGE SCALE GENOMIC DNA]</scope>
    <source>
        <strain>ATCC 51363 / DSM 5348 / JCM 9185 / NBRC 15509 / TH2</strain>
    </source>
</reference>
<name>AATB_METS5</name>
<sequence length="466" mass="51477">MESSMNVREYSNISMIKGPLLMVQGVADSAYNELVEVEMPNGERRRGIVVDSQKGISIVQVFEGTRGISPVGTTVRFLGRGLEVKISEEMLGRIFNPLGDPLDNGPMVIKGEKRDINGEPLNPAIRDYPEEFIQTGISAIDGLNSLLRGQKLPIFSGSGLPANILAAQIAKQATVRGEESNFAVVFGAIGVRYDEALFFRKFFEETGAINRVALIMSLANEPPVMKTLTPKTALTLAEYLAFEQDMHVLAILIDMTNYCEALREISASKEEVPGRGGYPGYMYTDLAQTYERAGKVIGKKGSITQMPILTMPNDDITHPIPDLTGYITEGQITLDRSLYNKGIYPPINVLMSLSRLAKDGIGEGKTRDDHKDLSNQLFAAYAKAVDTRGLAAIIGEDSLSDTDKKYLMFGDAFERKFVSQGVNENRDIETTLDIGWEVLSILPERELTNVKVDYIKKYHPAYRGKK</sequence>
<proteinExistence type="inferred from homology"/>
<accession>A4YI06</accession>
<feature type="chain" id="PRO_1000071992" description="A-type ATP synthase subunit B">
    <location>
        <begin position="1"/>
        <end position="466"/>
    </location>
</feature>
<gene>
    <name evidence="1" type="primary">atpB</name>
    <name type="ordered locus">Msed_1918</name>
</gene>
<dbReference type="EMBL" id="CP000682">
    <property type="protein sequence ID" value="ABP96058.1"/>
    <property type="molecule type" value="Genomic_DNA"/>
</dbReference>
<dbReference type="RefSeq" id="WP_012021845.1">
    <property type="nucleotide sequence ID" value="NZ_CP139956.1"/>
</dbReference>
<dbReference type="SMR" id="A4YI06"/>
<dbReference type="STRING" id="399549.Msed_1918"/>
<dbReference type="KEGG" id="mse:Msed_1918"/>
<dbReference type="eggNOG" id="arCOG00865">
    <property type="taxonomic scope" value="Archaea"/>
</dbReference>
<dbReference type="HOGENOM" id="CLU_022916_0_0_2"/>
<dbReference type="Proteomes" id="UP000000242">
    <property type="component" value="Chromosome"/>
</dbReference>
<dbReference type="GO" id="GO:0005886">
    <property type="term" value="C:plasma membrane"/>
    <property type="evidence" value="ECO:0007669"/>
    <property type="project" value="UniProtKB-SubCell"/>
</dbReference>
<dbReference type="GO" id="GO:0005524">
    <property type="term" value="F:ATP binding"/>
    <property type="evidence" value="ECO:0007669"/>
    <property type="project" value="UniProtKB-UniRule"/>
</dbReference>
<dbReference type="GO" id="GO:0046933">
    <property type="term" value="F:proton-transporting ATP synthase activity, rotational mechanism"/>
    <property type="evidence" value="ECO:0007669"/>
    <property type="project" value="UniProtKB-UniRule"/>
</dbReference>
<dbReference type="GO" id="GO:0046961">
    <property type="term" value="F:proton-transporting ATPase activity, rotational mechanism"/>
    <property type="evidence" value="ECO:0007669"/>
    <property type="project" value="TreeGrafter"/>
</dbReference>
<dbReference type="GO" id="GO:0042777">
    <property type="term" value="P:proton motive force-driven plasma membrane ATP synthesis"/>
    <property type="evidence" value="ECO:0007669"/>
    <property type="project" value="UniProtKB-UniRule"/>
</dbReference>
<dbReference type="CDD" id="cd18112">
    <property type="entry name" value="ATP-synt_V_A-type_beta_C"/>
    <property type="match status" value="1"/>
</dbReference>
<dbReference type="CDD" id="cd18118">
    <property type="entry name" value="ATP-synt_V_A-type_beta_N"/>
    <property type="match status" value="1"/>
</dbReference>
<dbReference type="CDD" id="cd01135">
    <property type="entry name" value="V_A-ATPase_B"/>
    <property type="match status" value="1"/>
</dbReference>
<dbReference type="Gene3D" id="3.40.50.12240">
    <property type="match status" value="1"/>
</dbReference>
<dbReference type="HAMAP" id="MF_00310">
    <property type="entry name" value="ATP_synth_B_arch"/>
    <property type="match status" value="1"/>
</dbReference>
<dbReference type="InterPro" id="IPR055190">
    <property type="entry name" value="ATP-synt_VA_C"/>
</dbReference>
<dbReference type="InterPro" id="IPR020003">
    <property type="entry name" value="ATPase_a/bsu_AS"/>
</dbReference>
<dbReference type="InterPro" id="IPR004100">
    <property type="entry name" value="ATPase_F1/V1/A1_a/bsu_N"/>
</dbReference>
<dbReference type="InterPro" id="IPR000194">
    <property type="entry name" value="ATPase_F1/V1/A1_a/bsu_nucl-bd"/>
</dbReference>
<dbReference type="InterPro" id="IPR027417">
    <property type="entry name" value="P-loop_NTPase"/>
</dbReference>
<dbReference type="InterPro" id="IPR022879">
    <property type="entry name" value="V-ATPase_su_B/beta"/>
</dbReference>
<dbReference type="NCBIfam" id="NF003235">
    <property type="entry name" value="PRK04196.1"/>
    <property type="match status" value="1"/>
</dbReference>
<dbReference type="PANTHER" id="PTHR43389">
    <property type="entry name" value="V-TYPE PROTON ATPASE SUBUNIT B"/>
    <property type="match status" value="1"/>
</dbReference>
<dbReference type="PANTHER" id="PTHR43389:SF4">
    <property type="entry name" value="V-TYPE PROTON ATPASE SUBUNIT B"/>
    <property type="match status" value="1"/>
</dbReference>
<dbReference type="Pfam" id="PF00006">
    <property type="entry name" value="ATP-synt_ab"/>
    <property type="match status" value="1"/>
</dbReference>
<dbReference type="Pfam" id="PF02874">
    <property type="entry name" value="ATP-synt_ab_N"/>
    <property type="match status" value="1"/>
</dbReference>
<dbReference type="Pfam" id="PF22919">
    <property type="entry name" value="ATP-synt_VA_C"/>
    <property type="match status" value="1"/>
</dbReference>
<dbReference type="PIRSF" id="PIRSF039114">
    <property type="entry name" value="V-ATPsynth_beta/V-ATPase_B"/>
    <property type="match status" value="1"/>
</dbReference>
<dbReference type="SUPFAM" id="SSF52540">
    <property type="entry name" value="P-loop containing nucleoside triphosphate hydrolases"/>
    <property type="match status" value="1"/>
</dbReference>
<dbReference type="PROSITE" id="PS00152">
    <property type="entry name" value="ATPASE_ALPHA_BETA"/>
    <property type="match status" value="1"/>
</dbReference>
<comment type="function">
    <text evidence="1">Component of the A-type ATP synthase that produces ATP from ADP in the presence of a proton gradient across the membrane. The B chain is a regulatory subunit.</text>
</comment>
<comment type="subunit">
    <text evidence="1">Has multiple subunits with at least A(3), B(3), C, D, E, F, H, I and proteolipid K(x).</text>
</comment>
<comment type="subcellular location">
    <subcellularLocation>
        <location evidence="1">Cell membrane</location>
        <topology evidence="1">Peripheral membrane protein</topology>
    </subcellularLocation>
</comment>
<comment type="similarity">
    <text evidence="1">Belongs to the ATPase alpha/beta chains family.</text>
</comment>
<keyword id="KW-0066">ATP synthesis</keyword>
<keyword id="KW-1003">Cell membrane</keyword>
<keyword id="KW-0375">Hydrogen ion transport</keyword>
<keyword id="KW-0406">Ion transport</keyword>
<keyword id="KW-0472">Membrane</keyword>
<keyword id="KW-1185">Reference proteome</keyword>
<keyword id="KW-0813">Transport</keyword>
<protein>
    <recommendedName>
        <fullName evidence="1">A-type ATP synthase subunit B</fullName>
    </recommendedName>
</protein>
<evidence type="ECO:0000255" key="1">
    <source>
        <dbReference type="HAMAP-Rule" id="MF_00310"/>
    </source>
</evidence>
<organism>
    <name type="scientific">Metallosphaera sedula (strain ATCC 51363 / DSM 5348 / JCM 9185 / NBRC 15509 / TH2)</name>
    <dbReference type="NCBI Taxonomy" id="399549"/>
    <lineage>
        <taxon>Archaea</taxon>
        <taxon>Thermoproteota</taxon>
        <taxon>Thermoprotei</taxon>
        <taxon>Sulfolobales</taxon>
        <taxon>Sulfolobaceae</taxon>
        <taxon>Metallosphaera</taxon>
    </lineage>
</organism>